<evidence type="ECO:0000255" key="1">
    <source>
        <dbReference type="HAMAP-Rule" id="MF_01351"/>
    </source>
</evidence>
<feature type="chain" id="PRO_0000250911" description="NADH-quinone oxidoreductase subunit I">
    <location>
        <begin position="1"/>
        <end position="166"/>
    </location>
</feature>
<feature type="domain" description="4Fe-4S ferredoxin-type 1" evidence="1">
    <location>
        <begin position="57"/>
        <end position="87"/>
    </location>
</feature>
<feature type="domain" description="4Fe-4S ferredoxin-type 2" evidence="1">
    <location>
        <begin position="97"/>
        <end position="126"/>
    </location>
</feature>
<feature type="binding site" evidence="1">
    <location>
        <position position="67"/>
    </location>
    <ligand>
        <name>[4Fe-4S] cluster</name>
        <dbReference type="ChEBI" id="CHEBI:49883"/>
        <label>1</label>
    </ligand>
</feature>
<feature type="binding site" evidence="1">
    <location>
        <position position="70"/>
    </location>
    <ligand>
        <name>[4Fe-4S] cluster</name>
        <dbReference type="ChEBI" id="CHEBI:49883"/>
        <label>1</label>
    </ligand>
</feature>
<feature type="binding site" evidence="1">
    <location>
        <position position="73"/>
    </location>
    <ligand>
        <name>[4Fe-4S] cluster</name>
        <dbReference type="ChEBI" id="CHEBI:49883"/>
        <label>1</label>
    </ligand>
</feature>
<feature type="binding site" evidence="1">
    <location>
        <position position="77"/>
    </location>
    <ligand>
        <name>[4Fe-4S] cluster</name>
        <dbReference type="ChEBI" id="CHEBI:49883"/>
        <label>2</label>
    </ligand>
</feature>
<feature type="binding site" evidence="1">
    <location>
        <position position="106"/>
    </location>
    <ligand>
        <name>[4Fe-4S] cluster</name>
        <dbReference type="ChEBI" id="CHEBI:49883"/>
        <label>2</label>
    </ligand>
</feature>
<feature type="binding site" evidence="1">
    <location>
        <position position="109"/>
    </location>
    <ligand>
        <name>[4Fe-4S] cluster</name>
        <dbReference type="ChEBI" id="CHEBI:49883"/>
        <label>2</label>
    </ligand>
</feature>
<feature type="binding site" evidence="1">
    <location>
        <position position="112"/>
    </location>
    <ligand>
        <name>[4Fe-4S] cluster</name>
        <dbReference type="ChEBI" id="CHEBI:49883"/>
        <label>2</label>
    </ligand>
</feature>
<feature type="binding site" evidence="1">
    <location>
        <position position="116"/>
    </location>
    <ligand>
        <name>[4Fe-4S] cluster</name>
        <dbReference type="ChEBI" id="CHEBI:49883"/>
        <label>1</label>
    </ligand>
</feature>
<comment type="function">
    <text evidence="1">NDH-1 shuttles electrons from NADH, via FMN and iron-sulfur (Fe-S) centers, to quinones in the respiratory chain. The immediate electron acceptor for the enzyme in this species is believed to be ubiquinone. Couples the redox reaction to proton translocation (for every two electrons transferred, four hydrogen ions are translocated across the cytoplasmic membrane), and thus conserves the redox energy in a proton gradient.</text>
</comment>
<comment type="catalytic activity">
    <reaction evidence="1">
        <text>a quinone + NADH + 5 H(+)(in) = a quinol + NAD(+) + 4 H(+)(out)</text>
        <dbReference type="Rhea" id="RHEA:57888"/>
        <dbReference type="ChEBI" id="CHEBI:15378"/>
        <dbReference type="ChEBI" id="CHEBI:24646"/>
        <dbReference type="ChEBI" id="CHEBI:57540"/>
        <dbReference type="ChEBI" id="CHEBI:57945"/>
        <dbReference type="ChEBI" id="CHEBI:132124"/>
    </reaction>
</comment>
<comment type="cofactor">
    <cofactor evidence="1">
        <name>[4Fe-4S] cluster</name>
        <dbReference type="ChEBI" id="CHEBI:49883"/>
    </cofactor>
    <text evidence="1">Binds 2 [4Fe-4S] clusters per subunit.</text>
</comment>
<comment type="subunit">
    <text evidence="1">NDH-1 is composed of 14 different subunits. Subunits NuoA, H, J, K, L, M, N constitute the membrane sector of the complex.</text>
</comment>
<comment type="subcellular location">
    <subcellularLocation>
        <location evidence="1">Cell inner membrane</location>
        <topology evidence="1">Peripheral membrane protein</topology>
    </subcellularLocation>
</comment>
<comment type="similarity">
    <text evidence="1">Belongs to the complex I 23 kDa subunit family.</text>
</comment>
<gene>
    <name evidence="1" type="primary">nuoI</name>
    <name type="ordered locus">lpl2697</name>
</gene>
<name>NUOI_LEGPL</name>
<keyword id="KW-0004">4Fe-4S</keyword>
<keyword id="KW-0997">Cell inner membrane</keyword>
<keyword id="KW-1003">Cell membrane</keyword>
<keyword id="KW-0408">Iron</keyword>
<keyword id="KW-0411">Iron-sulfur</keyword>
<keyword id="KW-0472">Membrane</keyword>
<keyword id="KW-0479">Metal-binding</keyword>
<keyword id="KW-0520">NAD</keyword>
<keyword id="KW-0874">Quinone</keyword>
<keyword id="KW-0677">Repeat</keyword>
<keyword id="KW-1278">Translocase</keyword>
<keyword id="KW-0830">Ubiquinone</keyword>
<organism>
    <name type="scientific">Legionella pneumophila (strain Lens)</name>
    <dbReference type="NCBI Taxonomy" id="297245"/>
    <lineage>
        <taxon>Bacteria</taxon>
        <taxon>Pseudomonadati</taxon>
        <taxon>Pseudomonadota</taxon>
        <taxon>Gammaproteobacteria</taxon>
        <taxon>Legionellales</taxon>
        <taxon>Legionellaceae</taxon>
        <taxon>Legionella</taxon>
    </lineage>
</organism>
<dbReference type="EC" id="7.1.1.-" evidence="1"/>
<dbReference type="EMBL" id="CR628337">
    <property type="protein sequence ID" value="CAH16938.1"/>
    <property type="molecule type" value="Genomic_DNA"/>
</dbReference>
<dbReference type="RefSeq" id="WP_010948470.1">
    <property type="nucleotide sequence ID" value="NC_006369.1"/>
</dbReference>
<dbReference type="SMR" id="Q5WT28"/>
<dbReference type="GeneID" id="57036779"/>
<dbReference type="KEGG" id="lpf:lpl2697"/>
<dbReference type="LegioList" id="lpl2697"/>
<dbReference type="HOGENOM" id="CLU_067218_5_1_6"/>
<dbReference type="Proteomes" id="UP000002517">
    <property type="component" value="Chromosome"/>
</dbReference>
<dbReference type="GO" id="GO:0005886">
    <property type="term" value="C:plasma membrane"/>
    <property type="evidence" value="ECO:0007669"/>
    <property type="project" value="UniProtKB-SubCell"/>
</dbReference>
<dbReference type="GO" id="GO:0051539">
    <property type="term" value="F:4 iron, 4 sulfur cluster binding"/>
    <property type="evidence" value="ECO:0007669"/>
    <property type="project" value="UniProtKB-KW"/>
</dbReference>
<dbReference type="GO" id="GO:0005506">
    <property type="term" value="F:iron ion binding"/>
    <property type="evidence" value="ECO:0007669"/>
    <property type="project" value="UniProtKB-UniRule"/>
</dbReference>
<dbReference type="GO" id="GO:0050136">
    <property type="term" value="F:NADH:ubiquinone reductase (non-electrogenic) activity"/>
    <property type="evidence" value="ECO:0007669"/>
    <property type="project" value="UniProtKB-UniRule"/>
</dbReference>
<dbReference type="GO" id="GO:0048038">
    <property type="term" value="F:quinone binding"/>
    <property type="evidence" value="ECO:0007669"/>
    <property type="project" value="UniProtKB-KW"/>
</dbReference>
<dbReference type="GO" id="GO:0009060">
    <property type="term" value="P:aerobic respiration"/>
    <property type="evidence" value="ECO:0007669"/>
    <property type="project" value="TreeGrafter"/>
</dbReference>
<dbReference type="FunFam" id="3.30.70.3270:FF:000003">
    <property type="entry name" value="NADH-quinone oxidoreductase subunit I"/>
    <property type="match status" value="1"/>
</dbReference>
<dbReference type="Gene3D" id="3.30.70.3270">
    <property type="match status" value="1"/>
</dbReference>
<dbReference type="HAMAP" id="MF_01351">
    <property type="entry name" value="NDH1_NuoI"/>
    <property type="match status" value="1"/>
</dbReference>
<dbReference type="InterPro" id="IPR017896">
    <property type="entry name" value="4Fe4S_Fe-S-bd"/>
</dbReference>
<dbReference type="InterPro" id="IPR017900">
    <property type="entry name" value="4Fe4S_Fe_S_CS"/>
</dbReference>
<dbReference type="InterPro" id="IPR010226">
    <property type="entry name" value="NADH_quinone_OxRdtase_chainI"/>
</dbReference>
<dbReference type="NCBIfam" id="TIGR01971">
    <property type="entry name" value="NuoI"/>
    <property type="match status" value="1"/>
</dbReference>
<dbReference type="NCBIfam" id="NF004538">
    <property type="entry name" value="PRK05888.1-4"/>
    <property type="match status" value="1"/>
</dbReference>
<dbReference type="PANTHER" id="PTHR10849:SF20">
    <property type="entry name" value="NADH DEHYDROGENASE [UBIQUINONE] IRON-SULFUR PROTEIN 8, MITOCHONDRIAL"/>
    <property type="match status" value="1"/>
</dbReference>
<dbReference type="PANTHER" id="PTHR10849">
    <property type="entry name" value="NADH DEHYDROGENASE UBIQUINONE IRON-SULFUR PROTEIN 8, MITOCHONDRIAL"/>
    <property type="match status" value="1"/>
</dbReference>
<dbReference type="Pfam" id="PF12838">
    <property type="entry name" value="Fer4_7"/>
    <property type="match status" value="1"/>
</dbReference>
<dbReference type="SUPFAM" id="SSF46548">
    <property type="entry name" value="alpha-helical ferredoxin"/>
    <property type="match status" value="1"/>
</dbReference>
<dbReference type="PROSITE" id="PS00198">
    <property type="entry name" value="4FE4S_FER_1"/>
    <property type="match status" value="2"/>
</dbReference>
<dbReference type="PROSITE" id="PS51379">
    <property type="entry name" value="4FE4S_FER_2"/>
    <property type="match status" value="2"/>
</dbReference>
<sequence length="166" mass="19291">MKKVYHYIIHYVRTYLLLELLAGLWLTVKYFFRKKITVQFPEEQTPLSPRFRGLLALRRYPNGEERCIACKLCEAVCPALAITIESEQRDDGSRRTTRYDIDMFKCINCGLCEESCPVDSIVVTPIHHYHISERGQNIMTKEKLLAVGDLMESQLAADRAADEKYR</sequence>
<protein>
    <recommendedName>
        <fullName evidence="1">NADH-quinone oxidoreductase subunit I</fullName>
        <ecNumber evidence="1">7.1.1.-</ecNumber>
    </recommendedName>
    <alternativeName>
        <fullName evidence="1">NADH dehydrogenase I subunit I</fullName>
    </alternativeName>
    <alternativeName>
        <fullName evidence="1">NDH-1 subunit I</fullName>
    </alternativeName>
</protein>
<proteinExistence type="inferred from homology"/>
<accession>Q5WT28</accession>
<reference key="1">
    <citation type="journal article" date="2004" name="Nat. Genet.">
        <title>Evidence in the Legionella pneumophila genome for exploitation of host cell functions and high genome plasticity.</title>
        <authorList>
            <person name="Cazalet C."/>
            <person name="Rusniok C."/>
            <person name="Brueggemann H."/>
            <person name="Zidane N."/>
            <person name="Magnier A."/>
            <person name="Ma L."/>
            <person name="Tichit M."/>
            <person name="Jarraud S."/>
            <person name="Bouchier C."/>
            <person name="Vandenesch F."/>
            <person name="Kunst F."/>
            <person name="Etienne J."/>
            <person name="Glaser P."/>
            <person name="Buchrieser C."/>
        </authorList>
    </citation>
    <scope>NUCLEOTIDE SEQUENCE [LARGE SCALE GENOMIC DNA]</scope>
    <source>
        <strain>Lens</strain>
    </source>
</reference>